<comment type="function">
    <text evidence="1">Involved in transcription antitermination. Required for transcription of ribosomal RNA (rRNA) genes. Binds specifically to the boxA antiterminator sequence of the ribosomal RNA (rrn) operons.</text>
</comment>
<comment type="similarity">
    <text evidence="1">Belongs to the NusB family.</text>
</comment>
<gene>
    <name evidence="1" type="primary">nusB</name>
    <name type="ordered locus">Sbal_3156</name>
</gene>
<feature type="chain" id="PRO_1000023770" description="Transcription antitermination protein NusB">
    <location>
        <begin position="1"/>
        <end position="134"/>
    </location>
</feature>
<keyword id="KW-1185">Reference proteome</keyword>
<keyword id="KW-0694">RNA-binding</keyword>
<keyword id="KW-0804">Transcription</keyword>
<keyword id="KW-0889">Transcription antitermination</keyword>
<keyword id="KW-0805">Transcription regulation</keyword>
<reference key="1">
    <citation type="submission" date="2007-02" db="EMBL/GenBank/DDBJ databases">
        <title>Complete sequence of chromosome of Shewanella baltica OS155.</title>
        <authorList>
            <consortium name="US DOE Joint Genome Institute"/>
            <person name="Copeland A."/>
            <person name="Lucas S."/>
            <person name="Lapidus A."/>
            <person name="Barry K."/>
            <person name="Detter J.C."/>
            <person name="Glavina del Rio T."/>
            <person name="Hammon N."/>
            <person name="Israni S."/>
            <person name="Dalin E."/>
            <person name="Tice H."/>
            <person name="Pitluck S."/>
            <person name="Sims D.R."/>
            <person name="Brettin T."/>
            <person name="Bruce D."/>
            <person name="Han C."/>
            <person name="Tapia R."/>
            <person name="Brainard J."/>
            <person name="Schmutz J."/>
            <person name="Larimer F."/>
            <person name="Land M."/>
            <person name="Hauser L."/>
            <person name="Kyrpides N."/>
            <person name="Mikhailova N."/>
            <person name="Brettar I."/>
            <person name="Klappenbach J."/>
            <person name="Konstantinidis K."/>
            <person name="Rodrigues J."/>
            <person name="Tiedje J."/>
            <person name="Richardson P."/>
        </authorList>
    </citation>
    <scope>NUCLEOTIDE SEQUENCE [LARGE SCALE GENOMIC DNA]</scope>
    <source>
        <strain>OS155 / ATCC BAA-1091</strain>
    </source>
</reference>
<dbReference type="EMBL" id="CP000563">
    <property type="protein sequence ID" value="ABN62637.1"/>
    <property type="molecule type" value="Genomic_DNA"/>
</dbReference>
<dbReference type="RefSeq" id="WP_006082638.1">
    <property type="nucleotide sequence ID" value="NC_009052.1"/>
</dbReference>
<dbReference type="SMR" id="A3D7C4"/>
<dbReference type="STRING" id="325240.Sbal_3156"/>
<dbReference type="GeneID" id="67444384"/>
<dbReference type="KEGG" id="sbl:Sbal_3156"/>
<dbReference type="HOGENOM" id="CLU_087843_4_1_6"/>
<dbReference type="OrthoDB" id="9789556at2"/>
<dbReference type="Proteomes" id="UP000001557">
    <property type="component" value="Chromosome"/>
</dbReference>
<dbReference type="GO" id="GO:0005829">
    <property type="term" value="C:cytosol"/>
    <property type="evidence" value="ECO:0007669"/>
    <property type="project" value="TreeGrafter"/>
</dbReference>
<dbReference type="GO" id="GO:0003723">
    <property type="term" value="F:RNA binding"/>
    <property type="evidence" value="ECO:0007669"/>
    <property type="project" value="UniProtKB-UniRule"/>
</dbReference>
<dbReference type="GO" id="GO:0006353">
    <property type="term" value="P:DNA-templated transcription termination"/>
    <property type="evidence" value="ECO:0007669"/>
    <property type="project" value="UniProtKB-UniRule"/>
</dbReference>
<dbReference type="GO" id="GO:0031564">
    <property type="term" value="P:transcription antitermination"/>
    <property type="evidence" value="ECO:0007669"/>
    <property type="project" value="UniProtKB-KW"/>
</dbReference>
<dbReference type="CDD" id="cd00619">
    <property type="entry name" value="Terminator_NusB"/>
    <property type="match status" value="1"/>
</dbReference>
<dbReference type="FunFam" id="1.10.940.10:FF:000001">
    <property type="entry name" value="Transcription antitermination factor NusB"/>
    <property type="match status" value="1"/>
</dbReference>
<dbReference type="Gene3D" id="1.10.940.10">
    <property type="entry name" value="NusB-like"/>
    <property type="match status" value="1"/>
</dbReference>
<dbReference type="HAMAP" id="MF_00073">
    <property type="entry name" value="NusB"/>
    <property type="match status" value="1"/>
</dbReference>
<dbReference type="InterPro" id="IPR035926">
    <property type="entry name" value="NusB-like_sf"/>
</dbReference>
<dbReference type="InterPro" id="IPR011605">
    <property type="entry name" value="NusB_fam"/>
</dbReference>
<dbReference type="InterPro" id="IPR006027">
    <property type="entry name" value="NusB_RsmB_TIM44"/>
</dbReference>
<dbReference type="NCBIfam" id="TIGR01951">
    <property type="entry name" value="nusB"/>
    <property type="match status" value="1"/>
</dbReference>
<dbReference type="PANTHER" id="PTHR11078:SF3">
    <property type="entry name" value="ANTITERMINATION NUSB DOMAIN-CONTAINING PROTEIN"/>
    <property type="match status" value="1"/>
</dbReference>
<dbReference type="PANTHER" id="PTHR11078">
    <property type="entry name" value="N UTILIZATION SUBSTANCE PROTEIN B-RELATED"/>
    <property type="match status" value="1"/>
</dbReference>
<dbReference type="Pfam" id="PF01029">
    <property type="entry name" value="NusB"/>
    <property type="match status" value="1"/>
</dbReference>
<dbReference type="SUPFAM" id="SSF48013">
    <property type="entry name" value="NusB-like"/>
    <property type="match status" value="1"/>
</dbReference>
<protein>
    <recommendedName>
        <fullName evidence="1">Transcription antitermination protein NusB</fullName>
    </recommendedName>
    <alternativeName>
        <fullName evidence="1">Antitermination factor NusB</fullName>
    </alternativeName>
</protein>
<accession>A3D7C4</accession>
<proteinExistence type="inferred from homology"/>
<organism>
    <name type="scientific">Shewanella baltica (strain OS155 / ATCC BAA-1091)</name>
    <dbReference type="NCBI Taxonomy" id="325240"/>
    <lineage>
        <taxon>Bacteria</taxon>
        <taxon>Pseudomonadati</taxon>
        <taxon>Pseudomonadota</taxon>
        <taxon>Gammaproteobacteria</taxon>
        <taxon>Alteromonadales</taxon>
        <taxon>Shewanellaceae</taxon>
        <taxon>Shewanella</taxon>
    </lineage>
</organism>
<name>NUSB_SHEB5</name>
<evidence type="ECO:0000255" key="1">
    <source>
        <dbReference type="HAMAP-Rule" id="MF_00073"/>
    </source>
</evidence>
<sequence>MKPSERRKARRLAVQAIYSWQLSGNNIADVEHEFLTEQSLDGVDVAYFRELFSGVATKKTQLDELIIPHLERPIDEVSPVEKAIVRLATYELTFRKDVPYKVAINEAIELAKAFGADESHKFVNGLLDKLVARK</sequence>